<feature type="chain" id="PRO_0000168022" description="Small ribosomal subunit protein bS20">
    <location>
        <begin position="1"/>
        <end position="92"/>
    </location>
</feature>
<accession>Q92GZ2</accession>
<gene>
    <name evidence="1" type="primary">rpsT</name>
    <name type="ordered locus">RC0980</name>
</gene>
<proteinExistence type="inferred from homology"/>
<reference key="1">
    <citation type="journal article" date="2001" name="Science">
        <title>Mechanisms of evolution in Rickettsia conorii and R. prowazekii.</title>
        <authorList>
            <person name="Ogata H."/>
            <person name="Audic S."/>
            <person name="Renesto-Audiffren P."/>
            <person name="Fournier P.-E."/>
            <person name="Barbe V."/>
            <person name="Samson D."/>
            <person name="Roux V."/>
            <person name="Cossart P."/>
            <person name="Weissenbach J."/>
            <person name="Claverie J.-M."/>
            <person name="Raoult D."/>
        </authorList>
    </citation>
    <scope>NUCLEOTIDE SEQUENCE [LARGE SCALE GENOMIC DNA]</scope>
    <source>
        <strain>ATCC VR-613 / Malish 7</strain>
    </source>
</reference>
<comment type="function">
    <text evidence="1">Binds directly to 16S ribosomal RNA.</text>
</comment>
<comment type="similarity">
    <text evidence="1">Belongs to the bacterial ribosomal protein bS20 family.</text>
</comment>
<comment type="sequence caution" evidence="2">
    <conflict type="erroneous initiation">
        <sequence resource="EMBL-CDS" id="AAL03518"/>
    </conflict>
</comment>
<sequence>MANHSSAKKAARQTVKRTLINKKRSSAIKTFIKKVVHEISIGNKENANIALSVAQSKIMQGVKKNIIKLNTASRKISRLSRQIKSLKVNNTL</sequence>
<dbReference type="EMBL" id="AE006914">
    <property type="protein sequence ID" value="AAL03518.1"/>
    <property type="status" value="ALT_INIT"/>
    <property type="molecule type" value="Genomic_DNA"/>
</dbReference>
<dbReference type="PIR" id="D97822">
    <property type="entry name" value="D97822"/>
</dbReference>
<dbReference type="RefSeq" id="WP_016830895.1">
    <property type="nucleotide sequence ID" value="NC_003103.1"/>
</dbReference>
<dbReference type="SMR" id="Q92GZ2"/>
<dbReference type="GeneID" id="928122"/>
<dbReference type="KEGG" id="rco:RC0980"/>
<dbReference type="PATRIC" id="fig|272944.4.peg.1120"/>
<dbReference type="HOGENOM" id="CLU_160655_3_0_5"/>
<dbReference type="Proteomes" id="UP000000816">
    <property type="component" value="Chromosome"/>
</dbReference>
<dbReference type="GO" id="GO:0015935">
    <property type="term" value="C:small ribosomal subunit"/>
    <property type="evidence" value="ECO:0007669"/>
    <property type="project" value="TreeGrafter"/>
</dbReference>
<dbReference type="GO" id="GO:0070181">
    <property type="term" value="F:small ribosomal subunit rRNA binding"/>
    <property type="evidence" value="ECO:0007669"/>
    <property type="project" value="TreeGrafter"/>
</dbReference>
<dbReference type="GO" id="GO:0003735">
    <property type="term" value="F:structural constituent of ribosome"/>
    <property type="evidence" value="ECO:0007669"/>
    <property type="project" value="InterPro"/>
</dbReference>
<dbReference type="GO" id="GO:0006412">
    <property type="term" value="P:translation"/>
    <property type="evidence" value="ECO:0007669"/>
    <property type="project" value="UniProtKB-UniRule"/>
</dbReference>
<dbReference type="Gene3D" id="1.20.58.110">
    <property type="entry name" value="Ribosomal protein S20"/>
    <property type="match status" value="1"/>
</dbReference>
<dbReference type="HAMAP" id="MF_00500">
    <property type="entry name" value="Ribosomal_bS20"/>
    <property type="match status" value="1"/>
</dbReference>
<dbReference type="InterPro" id="IPR002583">
    <property type="entry name" value="Ribosomal_bS20"/>
</dbReference>
<dbReference type="InterPro" id="IPR036510">
    <property type="entry name" value="Ribosomal_bS20_sf"/>
</dbReference>
<dbReference type="NCBIfam" id="TIGR00029">
    <property type="entry name" value="S20"/>
    <property type="match status" value="1"/>
</dbReference>
<dbReference type="PANTHER" id="PTHR33398">
    <property type="entry name" value="30S RIBOSOMAL PROTEIN S20"/>
    <property type="match status" value="1"/>
</dbReference>
<dbReference type="PANTHER" id="PTHR33398:SF1">
    <property type="entry name" value="SMALL RIBOSOMAL SUBUNIT PROTEIN BS20C"/>
    <property type="match status" value="1"/>
</dbReference>
<dbReference type="Pfam" id="PF01649">
    <property type="entry name" value="Ribosomal_S20p"/>
    <property type="match status" value="1"/>
</dbReference>
<dbReference type="SUPFAM" id="SSF46992">
    <property type="entry name" value="Ribosomal protein S20"/>
    <property type="match status" value="1"/>
</dbReference>
<keyword id="KW-0687">Ribonucleoprotein</keyword>
<keyword id="KW-0689">Ribosomal protein</keyword>
<keyword id="KW-0694">RNA-binding</keyword>
<keyword id="KW-0699">rRNA-binding</keyword>
<organism>
    <name type="scientific">Rickettsia conorii (strain ATCC VR-613 / Malish 7)</name>
    <dbReference type="NCBI Taxonomy" id="272944"/>
    <lineage>
        <taxon>Bacteria</taxon>
        <taxon>Pseudomonadati</taxon>
        <taxon>Pseudomonadota</taxon>
        <taxon>Alphaproteobacteria</taxon>
        <taxon>Rickettsiales</taxon>
        <taxon>Rickettsiaceae</taxon>
        <taxon>Rickettsieae</taxon>
        <taxon>Rickettsia</taxon>
        <taxon>spotted fever group</taxon>
    </lineage>
</organism>
<protein>
    <recommendedName>
        <fullName evidence="1">Small ribosomal subunit protein bS20</fullName>
    </recommendedName>
    <alternativeName>
        <fullName evidence="2">30S ribosomal protein S20</fullName>
    </alternativeName>
</protein>
<name>RS20_RICCN</name>
<evidence type="ECO:0000255" key="1">
    <source>
        <dbReference type="HAMAP-Rule" id="MF_00500"/>
    </source>
</evidence>
<evidence type="ECO:0000305" key="2"/>